<accession>A3PK36</accession>
<proteinExistence type="inferred from homology"/>
<reference key="1">
    <citation type="submission" date="2007-02" db="EMBL/GenBank/DDBJ databases">
        <title>Complete sequence of chromosome 1 of Rhodobacter sphaeroides ATCC 17029.</title>
        <authorList>
            <person name="Copeland A."/>
            <person name="Lucas S."/>
            <person name="Lapidus A."/>
            <person name="Barry K."/>
            <person name="Detter J.C."/>
            <person name="Glavina del Rio T."/>
            <person name="Hammon N."/>
            <person name="Israni S."/>
            <person name="Dalin E."/>
            <person name="Tice H."/>
            <person name="Pitluck S."/>
            <person name="Kiss H."/>
            <person name="Brettin T."/>
            <person name="Bruce D."/>
            <person name="Han C."/>
            <person name="Tapia R."/>
            <person name="Gilna P."/>
            <person name="Schmutz J."/>
            <person name="Larimer F."/>
            <person name="Land M."/>
            <person name="Hauser L."/>
            <person name="Kyrpides N."/>
            <person name="Mikhailova N."/>
            <person name="Richardson P."/>
            <person name="Mackenzie C."/>
            <person name="Choudhary M."/>
            <person name="Donohue T.J."/>
            <person name="Kaplan S."/>
        </authorList>
    </citation>
    <scope>NUCLEOTIDE SEQUENCE [LARGE SCALE GENOMIC DNA]</scope>
    <source>
        <strain>ATCC 17029 / ATH 2.4.9</strain>
    </source>
</reference>
<evidence type="ECO:0000255" key="1">
    <source>
        <dbReference type="HAMAP-Rule" id="MF_00150"/>
    </source>
</evidence>
<comment type="function">
    <text evidence="1">Catalyzes the NADPH-dependent reduction of N-acetyl-5-glutamyl phosphate to yield N-acetyl-L-glutamate 5-semialdehyde.</text>
</comment>
<comment type="catalytic activity">
    <reaction evidence="1">
        <text>N-acetyl-L-glutamate 5-semialdehyde + phosphate + NADP(+) = N-acetyl-L-glutamyl 5-phosphate + NADPH + H(+)</text>
        <dbReference type="Rhea" id="RHEA:21588"/>
        <dbReference type="ChEBI" id="CHEBI:15378"/>
        <dbReference type="ChEBI" id="CHEBI:29123"/>
        <dbReference type="ChEBI" id="CHEBI:43474"/>
        <dbReference type="ChEBI" id="CHEBI:57783"/>
        <dbReference type="ChEBI" id="CHEBI:57936"/>
        <dbReference type="ChEBI" id="CHEBI:58349"/>
        <dbReference type="EC" id="1.2.1.38"/>
    </reaction>
</comment>
<comment type="pathway">
    <text evidence="1">Amino-acid biosynthesis; L-arginine biosynthesis; N(2)-acetyl-L-ornithine from L-glutamate: step 3/4.</text>
</comment>
<comment type="subcellular location">
    <subcellularLocation>
        <location evidence="1">Cytoplasm</location>
    </subcellularLocation>
</comment>
<comment type="similarity">
    <text evidence="1">Belongs to the NAGSA dehydrogenase family. Type 1 subfamily.</text>
</comment>
<protein>
    <recommendedName>
        <fullName evidence="1">N-acetyl-gamma-glutamyl-phosphate reductase</fullName>
        <shortName evidence="1">AGPR</shortName>
        <ecNumber evidence="1">1.2.1.38</ecNumber>
    </recommendedName>
    <alternativeName>
        <fullName evidence="1">N-acetyl-glutamate semialdehyde dehydrogenase</fullName>
        <shortName evidence="1">NAGSA dehydrogenase</shortName>
    </alternativeName>
</protein>
<feature type="chain" id="PRO_1000011049" description="N-acetyl-gamma-glutamyl-phosphate reductase">
    <location>
        <begin position="1"/>
        <end position="342"/>
    </location>
</feature>
<feature type="active site" evidence="1">
    <location>
        <position position="149"/>
    </location>
</feature>
<keyword id="KW-0028">Amino-acid biosynthesis</keyword>
<keyword id="KW-0055">Arginine biosynthesis</keyword>
<keyword id="KW-0963">Cytoplasm</keyword>
<keyword id="KW-0521">NADP</keyword>
<keyword id="KW-0560">Oxidoreductase</keyword>
<name>ARGC_CERS1</name>
<dbReference type="EC" id="1.2.1.38" evidence="1"/>
<dbReference type="EMBL" id="CP000577">
    <property type="protein sequence ID" value="ABN76702.1"/>
    <property type="molecule type" value="Genomic_DNA"/>
</dbReference>
<dbReference type="RefSeq" id="WP_011841120.1">
    <property type="nucleotide sequence ID" value="NC_009049.1"/>
</dbReference>
<dbReference type="SMR" id="A3PK36"/>
<dbReference type="KEGG" id="rsh:Rsph17029_1592"/>
<dbReference type="HOGENOM" id="CLU_006384_0_1_5"/>
<dbReference type="UniPathway" id="UPA00068">
    <property type="reaction ID" value="UER00108"/>
</dbReference>
<dbReference type="GO" id="GO:0005737">
    <property type="term" value="C:cytoplasm"/>
    <property type="evidence" value="ECO:0007669"/>
    <property type="project" value="UniProtKB-SubCell"/>
</dbReference>
<dbReference type="GO" id="GO:0003942">
    <property type="term" value="F:N-acetyl-gamma-glutamyl-phosphate reductase activity"/>
    <property type="evidence" value="ECO:0007669"/>
    <property type="project" value="UniProtKB-UniRule"/>
</dbReference>
<dbReference type="GO" id="GO:0051287">
    <property type="term" value="F:NAD binding"/>
    <property type="evidence" value="ECO:0007669"/>
    <property type="project" value="InterPro"/>
</dbReference>
<dbReference type="GO" id="GO:0070401">
    <property type="term" value="F:NADP+ binding"/>
    <property type="evidence" value="ECO:0007669"/>
    <property type="project" value="InterPro"/>
</dbReference>
<dbReference type="GO" id="GO:0006526">
    <property type="term" value="P:L-arginine biosynthetic process"/>
    <property type="evidence" value="ECO:0007669"/>
    <property type="project" value="UniProtKB-UniRule"/>
</dbReference>
<dbReference type="CDD" id="cd23934">
    <property type="entry name" value="AGPR_1_C"/>
    <property type="match status" value="1"/>
</dbReference>
<dbReference type="CDD" id="cd17895">
    <property type="entry name" value="AGPR_1_N"/>
    <property type="match status" value="1"/>
</dbReference>
<dbReference type="Gene3D" id="3.30.360.10">
    <property type="entry name" value="Dihydrodipicolinate Reductase, domain 2"/>
    <property type="match status" value="1"/>
</dbReference>
<dbReference type="Gene3D" id="3.40.50.720">
    <property type="entry name" value="NAD(P)-binding Rossmann-like Domain"/>
    <property type="match status" value="1"/>
</dbReference>
<dbReference type="HAMAP" id="MF_00150">
    <property type="entry name" value="ArgC_type1"/>
    <property type="match status" value="1"/>
</dbReference>
<dbReference type="InterPro" id="IPR000706">
    <property type="entry name" value="AGPR_type-1"/>
</dbReference>
<dbReference type="InterPro" id="IPR036291">
    <property type="entry name" value="NAD(P)-bd_dom_sf"/>
</dbReference>
<dbReference type="InterPro" id="IPR050085">
    <property type="entry name" value="NAGSA_dehydrogenase"/>
</dbReference>
<dbReference type="InterPro" id="IPR000534">
    <property type="entry name" value="Semialdehyde_DH_NAD-bd"/>
</dbReference>
<dbReference type="NCBIfam" id="TIGR01850">
    <property type="entry name" value="argC"/>
    <property type="match status" value="1"/>
</dbReference>
<dbReference type="PANTHER" id="PTHR32338:SF10">
    <property type="entry name" value="N-ACETYL-GAMMA-GLUTAMYL-PHOSPHATE REDUCTASE, CHLOROPLASTIC-RELATED"/>
    <property type="match status" value="1"/>
</dbReference>
<dbReference type="PANTHER" id="PTHR32338">
    <property type="entry name" value="N-ACETYL-GAMMA-GLUTAMYL-PHOSPHATE REDUCTASE, CHLOROPLASTIC-RELATED-RELATED"/>
    <property type="match status" value="1"/>
</dbReference>
<dbReference type="Pfam" id="PF01118">
    <property type="entry name" value="Semialdhyde_dh"/>
    <property type="match status" value="1"/>
</dbReference>
<dbReference type="Pfam" id="PF22698">
    <property type="entry name" value="Semialdhyde_dhC_1"/>
    <property type="match status" value="1"/>
</dbReference>
<dbReference type="SMART" id="SM00859">
    <property type="entry name" value="Semialdhyde_dh"/>
    <property type="match status" value="1"/>
</dbReference>
<dbReference type="SUPFAM" id="SSF55347">
    <property type="entry name" value="Glyceraldehyde-3-phosphate dehydrogenase-like, C-terminal domain"/>
    <property type="match status" value="1"/>
</dbReference>
<dbReference type="SUPFAM" id="SSF51735">
    <property type="entry name" value="NAD(P)-binding Rossmann-fold domains"/>
    <property type="match status" value="1"/>
</dbReference>
<organism>
    <name type="scientific">Cereibacter sphaeroides (strain ATCC 17029 / ATH 2.4.9)</name>
    <name type="common">Rhodobacter sphaeroides</name>
    <dbReference type="NCBI Taxonomy" id="349101"/>
    <lineage>
        <taxon>Bacteria</taxon>
        <taxon>Pseudomonadati</taxon>
        <taxon>Pseudomonadota</taxon>
        <taxon>Alphaproteobacteria</taxon>
        <taxon>Rhodobacterales</taxon>
        <taxon>Paracoccaceae</taxon>
        <taxon>Cereibacter</taxon>
    </lineage>
</organism>
<sequence>MVQNIAILGASGYTGAELVRLIATHPAMRIVALSGDRKAGMAMSEVFPFLRHLDLPRLQKIEEIDFSSVDLAFCALPHATSQAVIADLPRDLKVVDLSADFRLRDPAAYETWYGKPHAAPELQKEAVYGLTEFYRDEIRGARLVAGTGCNAATGQYAIRPLIEAGVIDLDDILIDLKAGVSGAGRSLKENLLHAELSEGTHAYSAGGRHRHLGEFDQEFSKIAGRPVQVRFTPHLTPMNRGILANVYVKGDPQAVHRALAERYLTETFLEVLPFGALPSTRDIRGSNYVHIGVIGDRVPGCAMVVAVLDNLCKGSSGQAIQNANLMLGLDEAEGLRLAPVFP</sequence>
<gene>
    <name evidence="1" type="primary">argC</name>
    <name type="ordered locus">Rsph17029_1592</name>
</gene>